<sequence length="47" mass="5563">MAKGKRTFQPNNRRRARVHGFRLRMRTRAGRAIVTGRRRKGRRSLTA</sequence>
<protein>
    <recommendedName>
        <fullName evidence="1">Large ribosomal subunit protein bL34</fullName>
    </recommendedName>
    <alternativeName>
        <fullName evidence="2">50S ribosomal protein L34</fullName>
    </alternativeName>
</protein>
<organism>
    <name type="scientific">Mycobacterium sp. (strain JLS)</name>
    <dbReference type="NCBI Taxonomy" id="164757"/>
    <lineage>
        <taxon>Bacteria</taxon>
        <taxon>Bacillati</taxon>
        <taxon>Actinomycetota</taxon>
        <taxon>Actinomycetes</taxon>
        <taxon>Mycobacteriales</taxon>
        <taxon>Mycobacteriaceae</taxon>
        <taxon>Mycobacterium</taxon>
    </lineage>
</organism>
<accession>A3Q8S5</accession>
<comment type="similarity">
    <text evidence="1">Belongs to the bacterial ribosomal protein bL34 family.</text>
</comment>
<keyword id="KW-0687">Ribonucleoprotein</keyword>
<keyword id="KW-0689">Ribosomal protein</keyword>
<proteinExistence type="inferred from homology"/>
<name>RL34_MYCSJ</name>
<reference key="1">
    <citation type="submission" date="2007-02" db="EMBL/GenBank/DDBJ databases">
        <title>Complete sequence of Mycobacterium sp. JLS.</title>
        <authorList>
            <consortium name="US DOE Joint Genome Institute"/>
            <person name="Copeland A."/>
            <person name="Lucas S."/>
            <person name="Lapidus A."/>
            <person name="Barry K."/>
            <person name="Detter J.C."/>
            <person name="Glavina del Rio T."/>
            <person name="Hammon N."/>
            <person name="Israni S."/>
            <person name="Dalin E."/>
            <person name="Tice H."/>
            <person name="Pitluck S."/>
            <person name="Chain P."/>
            <person name="Malfatti S."/>
            <person name="Shin M."/>
            <person name="Vergez L."/>
            <person name="Schmutz J."/>
            <person name="Larimer F."/>
            <person name="Land M."/>
            <person name="Hauser L."/>
            <person name="Kyrpides N."/>
            <person name="Mikhailova N."/>
            <person name="Miller C.D."/>
            <person name="Anderson A.J."/>
            <person name="Sims R.C."/>
            <person name="Richardson P."/>
        </authorList>
    </citation>
    <scope>NUCLEOTIDE SEQUENCE [LARGE SCALE GENOMIC DNA]</scope>
    <source>
        <strain>JLS</strain>
    </source>
</reference>
<gene>
    <name evidence="1" type="primary">rpmH</name>
    <name type="ordered locus">Mjls_5789</name>
</gene>
<feature type="chain" id="PRO_1000013377" description="Large ribosomal subunit protein bL34">
    <location>
        <begin position="1"/>
        <end position="47"/>
    </location>
</feature>
<evidence type="ECO:0000255" key="1">
    <source>
        <dbReference type="HAMAP-Rule" id="MF_00391"/>
    </source>
</evidence>
<evidence type="ECO:0000305" key="2"/>
<dbReference type="EMBL" id="CP000580">
    <property type="protein sequence ID" value="ABO01553.1"/>
    <property type="molecule type" value="Genomic_DNA"/>
</dbReference>
<dbReference type="SMR" id="A3Q8S5"/>
<dbReference type="KEGG" id="mjl:Mjls_5789"/>
<dbReference type="HOGENOM" id="CLU_129938_2_1_11"/>
<dbReference type="BioCyc" id="MSP164757:G1G8C-5851-MONOMER"/>
<dbReference type="GO" id="GO:1990904">
    <property type="term" value="C:ribonucleoprotein complex"/>
    <property type="evidence" value="ECO:0007669"/>
    <property type="project" value="UniProtKB-KW"/>
</dbReference>
<dbReference type="GO" id="GO:0005840">
    <property type="term" value="C:ribosome"/>
    <property type="evidence" value="ECO:0007669"/>
    <property type="project" value="UniProtKB-KW"/>
</dbReference>
<dbReference type="GO" id="GO:0003735">
    <property type="term" value="F:structural constituent of ribosome"/>
    <property type="evidence" value="ECO:0007669"/>
    <property type="project" value="InterPro"/>
</dbReference>
<dbReference type="GO" id="GO:0006412">
    <property type="term" value="P:translation"/>
    <property type="evidence" value="ECO:0007669"/>
    <property type="project" value="UniProtKB-UniRule"/>
</dbReference>
<dbReference type="FunFam" id="1.10.287.3980:FF:000001">
    <property type="entry name" value="Mitochondrial ribosomal protein L34"/>
    <property type="match status" value="1"/>
</dbReference>
<dbReference type="Gene3D" id="1.10.287.3980">
    <property type="match status" value="1"/>
</dbReference>
<dbReference type="HAMAP" id="MF_00391">
    <property type="entry name" value="Ribosomal_bL34"/>
    <property type="match status" value="1"/>
</dbReference>
<dbReference type="InterPro" id="IPR000271">
    <property type="entry name" value="Ribosomal_bL34"/>
</dbReference>
<dbReference type="InterPro" id="IPR020939">
    <property type="entry name" value="Ribosomal_bL34_CS"/>
</dbReference>
<dbReference type="NCBIfam" id="TIGR01030">
    <property type="entry name" value="rpmH_bact"/>
    <property type="match status" value="1"/>
</dbReference>
<dbReference type="PANTHER" id="PTHR14503:SF4">
    <property type="entry name" value="LARGE RIBOSOMAL SUBUNIT PROTEIN BL34M"/>
    <property type="match status" value="1"/>
</dbReference>
<dbReference type="PANTHER" id="PTHR14503">
    <property type="entry name" value="MITOCHONDRIAL RIBOSOMAL PROTEIN 34 FAMILY MEMBER"/>
    <property type="match status" value="1"/>
</dbReference>
<dbReference type="Pfam" id="PF00468">
    <property type="entry name" value="Ribosomal_L34"/>
    <property type="match status" value="1"/>
</dbReference>
<dbReference type="PROSITE" id="PS00784">
    <property type="entry name" value="RIBOSOMAL_L34"/>
    <property type="match status" value="1"/>
</dbReference>